<feature type="chain" id="PRO_1000018079" description="Arginine--tRNA ligase">
    <location>
        <begin position="1"/>
        <end position="585"/>
    </location>
</feature>
<feature type="short sequence motif" description="'HIGH' region">
    <location>
        <begin position="131"/>
        <end position="141"/>
    </location>
</feature>
<reference key="1">
    <citation type="journal article" date="2011" name="J. Bacteriol.">
        <title>Genome of Ochrobactrum anthropi ATCC 49188 T, a versatile opportunistic pathogen and symbiont of several eukaryotic hosts.</title>
        <authorList>
            <person name="Chain P.S."/>
            <person name="Lang D.M."/>
            <person name="Comerci D.J."/>
            <person name="Malfatti S.A."/>
            <person name="Vergez L.M."/>
            <person name="Shin M."/>
            <person name="Ugalde R.A."/>
            <person name="Garcia E."/>
            <person name="Tolmasky M.E."/>
        </authorList>
    </citation>
    <scope>NUCLEOTIDE SEQUENCE [LARGE SCALE GENOMIC DNA]</scope>
    <source>
        <strain>ATCC 49188 / DSM 6882 / CCUG 24695 / JCM 21032 / LMG 3331 / NBRC 15819 / NCTC 12168 / Alc 37</strain>
    </source>
</reference>
<sequence length="585" mass="64881">MNIFADFDARIKKTLQDIDLKPKDGGDLDLSRIGVEPPRDSSHGDIATNAAMVLSKAVGQNPRELAGRIAEALASDADVETVDVAGPGFINLRLKATYWQRELSAMLNEGKDFGRSKLGAGSKVNVEYVSANPTGPMHVGHCRGAVVGDVLANLLKFAGYDVVKEYYINDAGAQIDVLARSVMLRYREALGENIGEIPSGLYPGDYLVPVGQELAKEFGSKLLEMPEAEALALVKDRTIDAMMAMIRADLDALNVHHDVFFSERKLHVDHARAIRNAINDLTLKGHVYKGKLPPPKGQLPEDWEDREQTLFRSTEVGDDIDRPLMKSDGAFTYFAGDVAYFKDKYDRGFNEMIYVLGADHGGYVKRLEAVARAVSDGKAKLTVLLCQLVKLFRDGEPVRMSKRSGEFITLRDVVDEVGRDPVRFMMLYRKNDAPLDFDFAKVTEQSKDNPVFYVQYASARCHSVFRQAADQLGLADLDRVGMAAHFDKLTDESEIALVRKLAEYPRLIEAAAIHQEPHRLAFYLYDLASAFHSQWNRGTENPDLRFIKVNDPDLSLARLGLVQVVSDVLTSGLTIIGADAPTEMR</sequence>
<accession>A6X1G1</accession>
<comment type="catalytic activity">
    <reaction evidence="1">
        <text>tRNA(Arg) + L-arginine + ATP = L-arginyl-tRNA(Arg) + AMP + diphosphate</text>
        <dbReference type="Rhea" id="RHEA:20301"/>
        <dbReference type="Rhea" id="RHEA-COMP:9658"/>
        <dbReference type="Rhea" id="RHEA-COMP:9673"/>
        <dbReference type="ChEBI" id="CHEBI:30616"/>
        <dbReference type="ChEBI" id="CHEBI:32682"/>
        <dbReference type="ChEBI" id="CHEBI:33019"/>
        <dbReference type="ChEBI" id="CHEBI:78442"/>
        <dbReference type="ChEBI" id="CHEBI:78513"/>
        <dbReference type="ChEBI" id="CHEBI:456215"/>
        <dbReference type="EC" id="6.1.1.19"/>
    </reaction>
</comment>
<comment type="subunit">
    <text evidence="1">Monomer.</text>
</comment>
<comment type="subcellular location">
    <subcellularLocation>
        <location evidence="1">Cytoplasm</location>
    </subcellularLocation>
</comment>
<comment type="similarity">
    <text evidence="1">Belongs to the class-I aminoacyl-tRNA synthetase family.</text>
</comment>
<evidence type="ECO:0000255" key="1">
    <source>
        <dbReference type="HAMAP-Rule" id="MF_00123"/>
    </source>
</evidence>
<proteinExistence type="inferred from homology"/>
<organism>
    <name type="scientific">Brucella anthropi (strain ATCC 49188 / DSM 6882 / CCUG 24695 / JCM 21032 / LMG 3331 / NBRC 15819 / NCTC 12168 / Alc 37)</name>
    <name type="common">Ochrobactrum anthropi</name>
    <dbReference type="NCBI Taxonomy" id="439375"/>
    <lineage>
        <taxon>Bacteria</taxon>
        <taxon>Pseudomonadati</taxon>
        <taxon>Pseudomonadota</taxon>
        <taxon>Alphaproteobacteria</taxon>
        <taxon>Hyphomicrobiales</taxon>
        <taxon>Brucellaceae</taxon>
        <taxon>Brucella/Ochrobactrum group</taxon>
        <taxon>Brucella</taxon>
    </lineage>
</organism>
<keyword id="KW-0030">Aminoacyl-tRNA synthetase</keyword>
<keyword id="KW-0067">ATP-binding</keyword>
<keyword id="KW-0963">Cytoplasm</keyword>
<keyword id="KW-0436">Ligase</keyword>
<keyword id="KW-0547">Nucleotide-binding</keyword>
<keyword id="KW-0648">Protein biosynthesis</keyword>
<keyword id="KW-1185">Reference proteome</keyword>
<name>SYR_BRUA4</name>
<dbReference type="EC" id="6.1.1.19" evidence="1"/>
<dbReference type="EMBL" id="CP000758">
    <property type="protein sequence ID" value="ABS15065.1"/>
    <property type="molecule type" value="Genomic_DNA"/>
</dbReference>
<dbReference type="RefSeq" id="WP_012092218.1">
    <property type="nucleotide sequence ID" value="NC_009667.1"/>
</dbReference>
<dbReference type="SMR" id="A6X1G1"/>
<dbReference type="STRING" id="439375.Oant_2351"/>
<dbReference type="KEGG" id="oan:Oant_2351"/>
<dbReference type="PATRIC" id="fig|439375.7.peg.2481"/>
<dbReference type="eggNOG" id="COG0018">
    <property type="taxonomic scope" value="Bacteria"/>
</dbReference>
<dbReference type="HOGENOM" id="CLU_006406_0_1_5"/>
<dbReference type="PhylomeDB" id="A6X1G1"/>
<dbReference type="Proteomes" id="UP000002301">
    <property type="component" value="Chromosome 1"/>
</dbReference>
<dbReference type="GO" id="GO:0005737">
    <property type="term" value="C:cytoplasm"/>
    <property type="evidence" value="ECO:0007669"/>
    <property type="project" value="UniProtKB-SubCell"/>
</dbReference>
<dbReference type="GO" id="GO:0004814">
    <property type="term" value="F:arginine-tRNA ligase activity"/>
    <property type="evidence" value="ECO:0007669"/>
    <property type="project" value="UniProtKB-UniRule"/>
</dbReference>
<dbReference type="GO" id="GO:0005524">
    <property type="term" value="F:ATP binding"/>
    <property type="evidence" value="ECO:0007669"/>
    <property type="project" value="UniProtKB-UniRule"/>
</dbReference>
<dbReference type="GO" id="GO:0006420">
    <property type="term" value="P:arginyl-tRNA aminoacylation"/>
    <property type="evidence" value="ECO:0007669"/>
    <property type="project" value="UniProtKB-UniRule"/>
</dbReference>
<dbReference type="CDD" id="cd00671">
    <property type="entry name" value="ArgRS_core"/>
    <property type="match status" value="1"/>
</dbReference>
<dbReference type="Gene3D" id="3.30.1360.70">
    <property type="entry name" value="Arginyl tRNA synthetase N-terminal domain"/>
    <property type="match status" value="1"/>
</dbReference>
<dbReference type="Gene3D" id="3.40.50.620">
    <property type="entry name" value="HUPs"/>
    <property type="match status" value="1"/>
</dbReference>
<dbReference type="Gene3D" id="1.10.730.10">
    <property type="entry name" value="Isoleucyl-tRNA Synthetase, Domain 1"/>
    <property type="match status" value="1"/>
</dbReference>
<dbReference type="HAMAP" id="MF_00123">
    <property type="entry name" value="Arg_tRNA_synth"/>
    <property type="match status" value="1"/>
</dbReference>
<dbReference type="InterPro" id="IPR001412">
    <property type="entry name" value="aa-tRNA-synth_I_CS"/>
</dbReference>
<dbReference type="InterPro" id="IPR001278">
    <property type="entry name" value="Arg-tRNA-ligase"/>
</dbReference>
<dbReference type="InterPro" id="IPR005148">
    <property type="entry name" value="Arg-tRNA-synth_N"/>
</dbReference>
<dbReference type="InterPro" id="IPR036695">
    <property type="entry name" value="Arg-tRNA-synth_N_sf"/>
</dbReference>
<dbReference type="InterPro" id="IPR035684">
    <property type="entry name" value="ArgRS_core"/>
</dbReference>
<dbReference type="InterPro" id="IPR008909">
    <property type="entry name" value="DALR_anticod-bd"/>
</dbReference>
<dbReference type="InterPro" id="IPR014729">
    <property type="entry name" value="Rossmann-like_a/b/a_fold"/>
</dbReference>
<dbReference type="InterPro" id="IPR009080">
    <property type="entry name" value="tRNAsynth_Ia_anticodon-bd"/>
</dbReference>
<dbReference type="NCBIfam" id="TIGR00456">
    <property type="entry name" value="argS"/>
    <property type="match status" value="1"/>
</dbReference>
<dbReference type="PANTHER" id="PTHR11956:SF5">
    <property type="entry name" value="ARGININE--TRNA LIGASE, CYTOPLASMIC"/>
    <property type="match status" value="1"/>
</dbReference>
<dbReference type="PANTHER" id="PTHR11956">
    <property type="entry name" value="ARGINYL-TRNA SYNTHETASE"/>
    <property type="match status" value="1"/>
</dbReference>
<dbReference type="Pfam" id="PF03485">
    <property type="entry name" value="Arg_tRNA_synt_N"/>
    <property type="match status" value="1"/>
</dbReference>
<dbReference type="Pfam" id="PF05746">
    <property type="entry name" value="DALR_1"/>
    <property type="match status" value="1"/>
</dbReference>
<dbReference type="Pfam" id="PF00750">
    <property type="entry name" value="tRNA-synt_1d"/>
    <property type="match status" value="2"/>
</dbReference>
<dbReference type="PRINTS" id="PR01038">
    <property type="entry name" value="TRNASYNTHARG"/>
</dbReference>
<dbReference type="SMART" id="SM01016">
    <property type="entry name" value="Arg_tRNA_synt_N"/>
    <property type="match status" value="1"/>
</dbReference>
<dbReference type="SMART" id="SM00836">
    <property type="entry name" value="DALR_1"/>
    <property type="match status" value="1"/>
</dbReference>
<dbReference type="SUPFAM" id="SSF47323">
    <property type="entry name" value="Anticodon-binding domain of a subclass of class I aminoacyl-tRNA synthetases"/>
    <property type="match status" value="1"/>
</dbReference>
<dbReference type="SUPFAM" id="SSF55190">
    <property type="entry name" value="Arginyl-tRNA synthetase (ArgRS), N-terminal 'additional' domain"/>
    <property type="match status" value="1"/>
</dbReference>
<dbReference type="SUPFAM" id="SSF52374">
    <property type="entry name" value="Nucleotidylyl transferase"/>
    <property type="match status" value="1"/>
</dbReference>
<dbReference type="PROSITE" id="PS00178">
    <property type="entry name" value="AA_TRNA_LIGASE_I"/>
    <property type="match status" value="1"/>
</dbReference>
<gene>
    <name evidence="1" type="primary">argS</name>
    <name type="ordered locus">Oant_2351</name>
</gene>
<protein>
    <recommendedName>
        <fullName evidence="1">Arginine--tRNA ligase</fullName>
        <ecNumber evidence="1">6.1.1.19</ecNumber>
    </recommendedName>
    <alternativeName>
        <fullName evidence="1">Arginyl-tRNA synthetase</fullName>
        <shortName evidence="1">ArgRS</shortName>
    </alternativeName>
</protein>